<dbReference type="EC" id="2.1.1.192" evidence="1"/>
<dbReference type="EMBL" id="AL111168">
    <property type="protein sequence ID" value="CAL35807.1"/>
    <property type="molecule type" value="Genomic_DNA"/>
</dbReference>
<dbReference type="PIR" id="E81269">
    <property type="entry name" value="E81269"/>
</dbReference>
<dbReference type="RefSeq" id="WP_002864795.1">
    <property type="nucleotide sequence ID" value="NZ_SZUC01000002.1"/>
</dbReference>
<dbReference type="RefSeq" id="YP_002345079.1">
    <property type="nucleotide sequence ID" value="NC_002163.1"/>
</dbReference>
<dbReference type="SMR" id="Q0P7R8"/>
<dbReference type="IntAct" id="Q0P7R8">
    <property type="interactions" value="29"/>
</dbReference>
<dbReference type="STRING" id="192222.Cj1713"/>
<dbReference type="PaxDb" id="192222-Cj1713"/>
<dbReference type="EnsemblBacteria" id="CAL35807">
    <property type="protein sequence ID" value="CAL35807"/>
    <property type="gene ID" value="Cj1713"/>
</dbReference>
<dbReference type="GeneID" id="905987"/>
<dbReference type="KEGG" id="cje:Cj1713"/>
<dbReference type="PATRIC" id="fig|192222.6.peg.1687"/>
<dbReference type="eggNOG" id="COG0820">
    <property type="taxonomic scope" value="Bacteria"/>
</dbReference>
<dbReference type="HOGENOM" id="CLU_029101_2_0_7"/>
<dbReference type="OrthoDB" id="9793973at2"/>
<dbReference type="Proteomes" id="UP000000799">
    <property type="component" value="Chromosome"/>
</dbReference>
<dbReference type="GO" id="GO:0005737">
    <property type="term" value="C:cytoplasm"/>
    <property type="evidence" value="ECO:0007669"/>
    <property type="project" value="UniProtKB-SubCell"/>
</dbReference>
<dbReference type="GO" id="GO:0051539">
    <property type="term" value="F:4 iron, 4 sulfur cluster binding"/>
    <property type="evidence" value="ECO:0007669"/>
    <property type="project" value="UniProtKB-UniRule"/>
</dbReference>
<dbReference type="GO" id="GO:0046872">
    <property type="term" value="F:metal ion binding"/>
    <property type="evidence" value="ECO:0007669"/>
    <property type="project" value="UniProtKB-KW"/>
</dbReference>
<dbReference type="GO" id="GO:0070040">
    <property type="term" value="F:rRNA (adenine(2503)-C2-)-methyltransferase activity"/>
    <property type="evidence" value="ECO:0007669"/>
    <property type="project" value="UniProtKB-UniRule"/>
</dbReference>
<dbReference type="GO" id="GO:0019843">
    <property type="term" value="F:rRNA binding"/>
    <property type="evidence" value="ECO:0007669"/>
    <property type="project" value="UniProtKB-UniRule"/>
</dbReference>
<dbReference type="GO" id="GO:0002935">
    <property type="term" value="F:tRNA (adenine(37)-C2)-methyltransferase activity"/>
    <property type="evidence" value="ECO:0007669"/>
    <property type="project" value="UniProtKB-UniRule"/>
</dbReference>
<dbReference type="GO" id="GO:0000049">
    <property type="term" value="F:tRNA binding"/>
    <property type="evidence" value="ECO:0007669"/>
    <property type="project" value="UniProtKB-UniRule"/>
</dbReference>
<dbReference type="GO" id="GO:0070475">
    <property type="term" value="P:rRNA base methylation"/>
    <property type="evidence" value="ECO:0007669"/>
    <property type="project" value="UniProtKB-UniRule"/>
</dbReference>
<dbReference type="GO" id="GO:0030488">
    <property type="term" value="P:tRNA methylation"/>
    <property type="evidence" value="ECO:0007669"/>
    <property type="project" value="UniProtKB-UniRule"/>
</dbReference>
<dbReference type="CDD" id="cd01335">
    <property type="entry name" value="Radical_SAM"/>
    <property type="match status" value="1"/>
</dbReference>
<dbReference type="FunFam" id="3.20.20.70:FF:000014">
    <property type="entry name" value="Probable dual-specificity RNA methyltransferase RlmN"/>
    <property type="match status" value="1"/>
</dbReference>
<dbReference type="Gene3D" id="1.10.150.530">
    <property type="match status" value="1"/>
</dbReference>
<dbReference type="Gene3D" id="3.20.20.70">
    <property type="entry name" value="Aldolase class I"/>
    <property type="match status" value="1"/>
</dbReference>
<dbReference type="HAMAP" id="MF_01849">
    <property type="entry name" value="RNA_methyltr_RlmN"/>
    <property type="match status" value="1"/>
</dbReference>
<dbReference type="InterPro" id="IPR013785">
    <property type="entry name" value="Aldolase_TIM"/>
</dbReference>
<dbReference type="InterPro" id="IPR006638">
    <property type="entry name" value="Elp3/MiaA/NifB-like_rSAM"/>
</dbReference>
<dbReference type="InterPro" id="IPR040072">
    <property type="entry name" value="Methyltransferase_A"/>
</dbReference>
<dbReference type="InterPro" id="IPR048641">
    <property type="entry name" value="RlmN_N"/>
</dbReference>
<dbReference type="InterPro" id="IPR027492">
    <property type="entry name" value="RNA_MTrfase_RlmN"/>
</dbReference>
<dbReference type="InterPro" id="IPR004383">
    <property type="entry name" value="rRNA_lsu_MTrfase_RlmN/Cfr"/>
</dbReference>
<dbReference type="InterPro" id="IPR007197">
    <property type="entry name" value="rSAM"/>
</dbReference>
<dbReference type="NCBIfam" id="TIGR00048">
    <property type="entry name" value="rRNA_mod_RlmN"/>
    <property type="match status" value="1"/>
</dbReference>
<dbReference type="PANTHER" id="PTHR30544">
    <property type="entry name" value="23S RRNA METHYLTRANSFERASE"/>
    <property type="match status" value="1"/>
</dbReference>
<dbReference type="PANTHER" id="PTHR30544:SF5">
    <property type="entry name" value="RADICAL SAM CORE DOMAIN-CONTAINING PROTEIN"/>
    <property type="match status" value="1"/>
</dbReference>
<dbReference type="Pfam" id="PF04055">
    <property type="entry name" value="Radical_SAM"/>
    <property type="match status" value="1"/>
</dbReference>
<dbReference type="Pfam" id="PF21016">
    <property type="entry name" value="RlmN_N"/>
    <property type="match status" value="1"/>
</dbReference>
<dbReference type="PIRSF" id="PIRSF006004">
    <property type="entry name" value="CHP00048"/>
    <property type="match status" value="1"/>
</dbReference>
<dbReference type="SFLD" id="SFLDF00275">
    <property type="entry name" value="adenosine_C2_methyltransferase"/>
    <property type="match status" value="1"/>
</dbReference>
<dbReference type="SFLD" id="SFLDG01062">
    <property type="entry name" value="methyltransferase_(Class_A)"/>
    <property type="match status" value="1"/>
</dbReference>
<dbReference type="SMART" id="SM00729">
    <property type="entry name" value="Elp3"/>
    <property type="match status" value="1"/>
</dbReference>
<dbReference type="SUPFAM" id="SSF102114">
    <property type="entry name" value="Radical SAM enzymes"/>
    <property type="match status" value="1"/>
</dbReference>
<dbReference type="PROSITE" id="PS51918">
    <property type="entry name" value="RADICAL_SAM"/>
    <property type="match status" value="1"/>
</dbReference>
<feature type="chain" id="PRO_0000350094" description="Dual-specificity RNA methyltransferase RlmN">
    <location>
        <begin position="1"/>
        <end position="356"/>
    </location>
</feature>
<feature type="domain" description="Radical SAM core" evidence="2">
    <location>
        <begin position="108"/>
        <end position="341"/>
    </location>
</feature>
<feature type="active site" description="Proton acceptor" evidence="1">
    <location>
        <position position="89"/>
    </location>
</feature>
<feature type="active site" description="S-methylcysteine intermediate" evidence="1">
    <location>
        <position position="346"/>
    </location>
</feature>
<feature type="binding site" evidence="1">
    <location>
        <position position="122"/>
    </location>
    <ligand>
        <name>[4Fe-4S] cluster</name>
        <dbReference type="ChEBI" id="CHEBI:49883"/>
        <note>4Fe-4S-S-AdoMet</note>
    </ligand>
</feature>
<feature type="binding site" evidence="1">
    <location>
        <position position="126"/>
    </location>
    <ligand>
        <name>[4Fe-4S] cluster</name>
        <dbReference type="ChEBI" id="CHEBI:49883"/>
        <note>4Fe-4S-S-AdoMet</note>
    </ligand>
</feature>
<feature type="binding site" evidence="1">
    <location>
        <position position="129"/>
    </location>
    <ligand>
        <name>[4Fe-4S] cluster</name>
        <dbReference type="ChEBI" id="CHEBI:49883"/>
        <note>4Fe-4S-S-AdoMet</note>
    </ligand>
</feature>
<feature type="binding site" evidence="1">
    <location>
        <begin position="172"/>
        <end position="173"/>
    </location>
    <ligand>
        <name>S-adenosyl-L-methionine</name>
        <dbReference type="ChEBI" id="CHEBI:59789"/>
    </ligand>
</feature>
<feature type="binding site" evidence="1">
    <location>
        <position position="204"/>
    </location>
    <ligand>
        <name>S-adenosyl-L-methionine</name>
        <dbReference type="ChEBI" id="CHEBI:59789"/>
    </ligand>
</feature>
<feature type="binding site" evidence="1">
    <location>
        <begin position="227"/>
        <end position="229"/>
    </location>
    <ligand>
        <name>S-adenosyl-L-methionine</name>
        <dbReference type="ChEBI" id="CHEBI:59789"/>
    </ligand>
</feature>
<feature type="binding site" evidence="1">
    <location>
        <position position="303"/>
    </location>
    <ligand>
        <name>S-adenosyl-L-methionine</name>
        <dbReference type="ChEBI" id="CHEBI:59789"/>
    </ligand>
</feature>
<feature type="disulfide bond" description="(transient)" evidence="1">
    <location>
        <begin position="115"/>
        <end position="346"/>
    </location>
</feature>
<keyword id="KW-0004">4Fe-4S</keyword>
<keyword id="KW-0963">Cytoplasm</keyword>
<keyword id="KW-1015">Disulfide bond</keyword>
<keyword id="KW-0408">Iron</keyword>
<keyword id="KW-0411">Iron-sulfur</keyword>
<keyword id="KW-0479">Metal-binding</keyword>
<keyword id="KW-0489">Methyltransferase</keyword>
<keyword id="KW-1185">Reference proteome</keyword>
<keyword id="KW-0698">rRNA processing</keyword>
<keyword id="KW-0949">S-adenosyl-L-methionine</keyword>
<keyword id="KW-0808">Transferase</keyword>
<keyword id="KW-0819">tRNA processing</keyword>
<accession>Q0P7R8</accession>
<name>RLMN_CAMJE</name>
<protein>
    <recommendedName>
        <fullName evidence="1">Dual-specificity RNA methyltransferase RlmN</fullName>
        <ecNumber evidence="1">2.1.1.192</ecNumber>
    </recommendedName>
    <alternativeName>
        <fullName evidence="1">23S rRNA (adenine(2503)-C(2))-methyltransferase</fullName>
    </alternativeName>
    <alternativeName>
        <fullName evidence="1">23S rRNA m2A2503 methyltransferase</fullName>
    </alternativeName>
    <alternativeName>
        <fullName evidence="1">Ribosomal RNA large subunit methyltransferase N</fullName>
    </alternativeName>
    <alternativeName>
        <fullName evidence="1">tRNA (adenine(37)-C(2))-methyltransferase</fullName>
    </alternativeName>
    <alternativeName>
        <fullName evidence="1">tRNA m2A37 methyltransferase</fullName>
    </alternativeName>
</protein>
<sequence length="356" mass="40254">MKELVNILDFLPEELGEKIKPMFRVKQIYQWIYQKYANNFSDMSSLPKDLRLELARNFHFSPVKCVKNEQSKDGSIKYLFELIDGLRVESVLLPMKEEKIDAEGKRISHARYTICVSSQVGCKSGCSFCLTAKGGLKRNLSAGEIVGQILWIKKQNNIPYERRVNIVYMGMGEPLDNLKNVSKAVKILAQNEGLAISPRRQTISTSGLAKQIKELGQMNLGVLLAISLHAVNDELRTELMPINKAYNIAAIMDAVREFPIDQRKRVMFEYLLIDGINDKLEHAKELVKLLNGIKAKVNLILFNPHEGSLYKRPSLENAIKFQDLLSNKGVTCTIRESKGLDISAACGQLKERAKEQ</sequence>
<proteinExistence type="inferred from homology"/>
<comment type="function">
    <text evidence="1">Specifically methylates position 2 of adenine 2503 in 23S rRNA and position 2 of adenine 37 in tRNAs. m2A2503 modification seems to play a crucial role in the proofreading step occurring at the peptidyl transferase center and thus would serve to optimize ribosomal fidelity.</text>
</comment>
<comment type="catalytic activity">
    <reaction evidence="1">
        <text>adenosine(2503) in 23S rRNA + 2 reduced [2Fe-2S]-[ferredoxin] + 2 S-adenosyl-L-methionine = 2-methyladenosine(2503) in 23S rRNA + 5'-deoxyadenosine + L-methionine + 2 oxidized [2Fe-2S]-[ferredoxin] + S-adenosyl-L-homocysteine</text>
        <dbReference type="Rhea" id="RHEA:42916"/>
        <dbReference type="Rhea" id="RHEA-COMP:10000"/>
        <dbReference type="Rhea" id="RHEA-COMP:10001"/>
        <dbReference type="Rhea" id="RHEA-COMP:10152"/>
        <dbReference type="Rhea" id="RHEA-COMP:10282"/>
        <dbReference type="ChEBI" id="CHEBI:17319"/>
        <dbReference type="ChEBI" id="CHEBI:33737"/>
        <dbReference type="ChEBI" id="CHEBI:33738"/>
        <dbReference type="ChEBI" id="CHEBI:57844"/>
        <dbReference type="ChEBI" id="CHEBI:57856"/>
        <dbReference type="ChEBI" id="CHEBI:59789"/>
        <dbReference type="ChEBI" id="CHEBI:74411"/>
        <dbReference type="ChEBI" id="CHEBI:74497"/>
        <dbReference type="EC" id="2.1.1.192"/>
    </reaction>
</comment>
<comment type="catalytic activity">
    <reaction evidence="1">
        <text>adenosine(37) in tRNA + 2 reduced [2Fe-2S]-[ferredoxin] + 2 S-adenosyl-L-methionine = 2-methyladenosine(37) in tRNA + 5'-deoxyadenosine + L-methionine + 2 oxidized [2Fe-2S]-[ferredoxin] + S-adenosyl-L-homocysteine</text>
        <dbReference type="Rhea" id="RHEA:43332"/>
        <dbReference type="Rhea" id="RHEA-COMP:10000"/>
        <dbReference type="Rhea" id="RHEA-COMP:10001"/>
        <dbReference type="Rhea" id="RHEA-COMP:10162"/>
        <dbReference type="Rhea" id="RHEA-COMP:10485"/>
        <dbReference type="ChEBI" id="CHEBI:17319"/>
        <dbReference type="ChEBI" id="CHEBI:33737"/>
        <dbReference type="ChEBI" id="CHEBI:33738"/>
        <dbReference type="ChEBI" id="CHEBI:57844"/>
        <dbReference type="ChEBI" id="CHEBI:57856"/>
        <dbReference type="ChEBI" id="CHEBI:59789"/>
        <dbReference type="ChEBI" id="CHEBI:74411"/>
        <dbReference type="ChEBI" id="CHEBI:74497"/>
        <dbReference type="EC" id="2.1.1.192"/>
    </reaction>
</comment>
<comment type="cofactor">
    <cofactor evidence="1">
        <name>[4Fe-4S] cluster</name>
        <dbReference type="ChEBI" id="CHEBI:49883"/>
    </cofactor>
    <text evidence="1">Binds 1 [4Fe-4S] cluster. The cluster is coordinated with 3 cysteines and an exchangeable S-adenosyl-L-methionine.</text>
</comment>
<comment type="subcellular location">
    <subcellularLocation>
        <location evidence="1">Cytoplasm</location>
    </subcellularLocation>
</comment>
<comment type="miscellaneous">
    <text evidence="1">Reaction proceeds by a ping-pong mechanism involving intermediate methylation of a conserved cysteine residue.</text>
</comment>
<comment type="similarity">
    <text evidence="1">Belongs to the radical SAM superfamily. RlmN family.</text>
</comment>
<gene>
    <name evidence="1" type="primary">rlmN</name>
    <name type="ordered locus">Cj1713</name>
</gene>
<reference key="1">
    <citation type="journal article" date="2000" name="Nature">
        <title>The genome sequence of the food-borne pathogen Campylobacter jejuni reveals hypervariable sequences.</title>
        <authorList>
            <person name="Parkhill J."/>
            <person name="Wren B.W."/>
            <person name="Mungall K.L."/>
            <person name="Ketley J.M."/>
            <person name="Churcher C.M."/>
            <person name="Basham D."/>
            <person name="Chillingworth T."/>
            <person name="Davies R.M."/>
            <person name="Feltwell T."/>
            <person name="Holroyd S."/>
            <person name="Jagels K."/>
            <person name="Karlyshev A.V."/>
            <person name="Moule S."/>
            <person name="Pallen M.J."/>
            <person name="Penn C.W."/>
            <person name="Quail M.A."/>
            <person name="Rajandream M.A."/>
            <person name="Rutherford K.M."/>
            <person name="van Vliet A.H.M."/>
            <person name="Whitehead S."/>
            <person name="Barrell B.G."/>
        </authorList>
    </citation>
    <scope>NUCLEOTIDE SEQUENCE [LARGE SCALE GENOMIC DNA]</scope>
    <source>
        <strain>ATCC 700819 / NCTC 11168</strain>
    </source>
</reference>
<evidence type="ECO:0000255" key="1">
    <source>
        <dbReference type="HAMAP-Rule" id="MF_01849"/>
    </source>
</evidence>
<evidence type="ECO:0000255" key="2">
    <source>
        <dbReference type="PROSITE-ProRule" id="PRU01266"/>
    </source>
</evidence>
<organism>
    <name type="scientific">Campylobacter jejuni subsp. jejuni serotype O:2 (strain ATCC 700819 / NCTC 11168)</name>
    <dbReference type="NCBI Taxonomy" id="192222"/>
    <lineage>
        <taxon>Bacteria</taxon>
        <taxon>Pseudomonadati</taxon>
        <taxon>Campylobacterota</taxon>
        <taxon>Epsilonproteobacteria</taxon>
        <taxon>Campylobacterales</taxon>
        <taxon>Campylobacteraceae</taxon>
        <taxon>Campylobacter</taxon>
    </lineage>
</organism>